<dbReference type="EC" id="3.2.1.31" evidence="4"/>
<dbReference type="EMBL" id="CM002236">
    <property type="protein sequence ID" value="EAA35527.1"/>
    <property type="molecule type" value="Genomic_DNA"/>
</dbReference>
<dbReference type="RefSeq" id="XP_964763.1">
    <property type="nucleotide sequence ID" value="XM_959670.3"/>
</dbReference>
<dbReference type="SMR" id="Q7SFB0"/>
<dbReference type="STRING" id="367110.Q7SFB0"/>
<dbReference type="PaxDb" id="5141-EFNCRP00000000758"/>
<dbReference type="EnsemblFungi" id="EAA35527">
    <property type="protein sequence ID" value="EAA35527"/>
    <property type="gene ID" value="NCU00937"/>
</dbReference>
<dbReference type="GeneID" id="3880916"/>
<dbReference type="KEGG" id="ncr:NCU00937"/>
<dbReference type="VEuPathDB" id="FungiDB:NCU00937"/>
<dbReference type="HOGENOM" id="CLU_022148_0_0_1"/>
<dbReference type="InParanoid" id="Q7SFB0"/>
<dbReference type="OrthoDB" id="2796951at2759"/>
<dbReference type="BRENDA" id="3.2.1.31">
    <property type="organism ID" value="3627"/>
</dbReference>
<dbReference type="Proteomes" id="UP000001805">
    <property type="component" value="Chromosome 1, Linkage Group I"/>
</dbReference>
<dbReference type="GO" id="GO:0005576">
    <property type="term" value="C:extracellular region"/>
    <property type="evidence" value="ECO:0007669"/>
    <property type="project" value="UniProtKB-SubCell"/>
</dbReference>
<dbReference type="GO" id="GO:0004566">
    <property type="term" value="F:beta-glucuronidase activity"/>
    <property type="evidence" value="ECO:0007669"/>
    <property type="project" value="UniProtKB-EC"/>
</dbReference>
<dbReference type="Gene3D" id="3.20.20.80">
    <property type="entry name" value="Glycosidases"/>
    <property type="match status" value="1"/>
</dbReference>
<dbReference type="InterPro" id="IPR052974">
    <property type="entry name" value="GH79_Enzymes"/>
</dbReference>
<dbReference type="InterPro" id="IPR031728">
    <property type="entry name" value="GlcAase_C"/>
</dbReference>
<dbReference type="InterPro" id="IPR017853">
    <property type="entry name" value="Glycoside_hydrolase_SF"/>
</dbReference>
<dbReference type="PANTHER" id="PTHR36183">
    <property type="entry name" value="BETA-GLUCURONIDASE"/>
    <property type="match status" value="1"/>
</dbReference>
<dbReference type="PANTHER" id="PTHR36183:SF2">
    <property type="entry name" value="BETA-GLUCURONIDASE C-TERMINAL DOMAIN-CONTAINING PROTEIN"/>
    <property type="match status" value="1"/>
</dbReference>
<dbReference type="Pfam" id="PF16862">
    <property type="entry name" value="Glyco_hydro_79C"/>
    <property type="match status" value="1"/>
</dbReference>
<dbReference type="SUPFAM" id="SSF51445">
    <property type="entry name" value="(Trans)glycosidases"/>
    <property type="match status" value="1"/>
</dbReference>
<gene>
    <name type="ORF">NCU00937</name>
</gene>
<reference key="1">
    <citation type="journal article" date="2003" name="Nature">
        <title>The genome sequence of the filamentous fungus Neurospora crassa.</title>
        <authorList>
            <person name="Galagan J.E."/>
            <person name="Calvo S.E."/>
            <person name="Borkovich K.A."/>
            <person name="Selker E.U."/>
            <person name="Read N.D."/>
            <person name="Jaffe D.B."/>
            <person name="FitzHugh W."/>
            <person name="Ma L.-J."/>
            <person name="Smirnov S."/>
            <person name="Purcell S."/>
            <person name="Rehman B."/>
            <person name="Elkins T."/>
            <person name="Engels R."/>
            <person name="Wang S."/>
            <person name="Nielsen C.B."/>
            <person name="Butler J."/>
            <person name="Endrizzi M."/>
            <person name="Qui D."/>
            <person name="Ianakiev P."/>
            <person name="Bell-Pedersen D."/>
            <person name="Nelson M.A."/>
            <person name="Werner-Washburne M."/>
            <person name="Selitrennikoff C.P."/>
            <person name="Kinsey J.A."/>
            <person name="Braun E.L."/>
            <person name="Zelter A."/>
            <person name="Schulte U."/>
            <person name="Kothe G.O."/>
            <person name="Jedd G."/>
            <person name="Mewes H.-W."/>
            <person name="Staben C."/>
            <person name="Marcotte E."/>
            <person name="Greenberg D."/>
            <person name="Roy A."/>
            <person name="Foley K."/>
            <person name="Naylor J."/>
            <person name="Stange-Thomann N."/>
            <person name="Barrett R."/>
            <person name="Gnerre S."/>
            <person name="Kamal M."/>
            <person name="Kamvysselis M."/>
            <person name="Mauceli E.W."/>
            <person name="Bielke C."/>
            <person name="Rudd S."/>
            <person name="Frishman D."/>
            <person name="Krystofova S."/>
            <person name="Rasmussen C."/>
            <person name="Metzenberg R.L."/>
            <person name="Perkins D.D."/>
            <person name="Kroken S."/>
            <person name="Cogoni C."/>
            <person name="Macino G."/>
            <person name="Catcheside D.E.A."/>
            <person name="Li W."/>
            <person name="Pratt R.J."/>
            <person name="Osmani S.A."/>
            <person name="DeSouza C.P.C."/>
            <person name="Glass N.L."/>
            <person name="Orbach M.J."/>
            <person name="Berglund J.A."/>
            <person name="Voelker R."/>
            <person name="Yarden O."/>
            <person name="Plamann M."/>
            <person name="Seiler S."/>
            <person name="Dunlap J.C."/>
            <person name="Radford A."/>
            <person name="Aramayo R."/>
            <person name="Natvig D.O."/>
            <person name="Alex L.A."/>
            <person name="Mannhaupt G."/>
            <person name="Ebbole D.J."/>
            <person name="Freitag M."/>
            <person name="Paulsen I."/>
            <person name="Sachs M.S."/>
            <person name="Lander E.S."/>
            <person name="Nusbaum C."/>
            <person name="Birren B.W."/>
        </authorList>
    </citation>
    <scope>NUCLEOTIDE SEQUENCE [LARGE SCALE GENOMIC DNA]</scope>
    <source>
        <strain>ATCC 24698 / 74-OR23-1A / CBS 708.71 / DSM 1257 / FGSC 987</strain>
    </source>
</reference>
<reference key="2">
    <citation type="journal article" date="2008" name="Carbohydr. Res.">
        <title>Properties of family 79 beta-glucuronidases that hydrolyze beta-glucuronosyl and 4-O-methyl-beta-glucuronosyl residues of arabinogalactan-protein.</title>
        <authorList>
            <person name="Konishi T."/>
            <person name="Kotake T."/>
            <person name="Soraya D."/>
            <person name="Matsuoka K."/>
            <person name="Koyama T."/>
            <person name="Kaneko S."/>
            <person name="Igarashi K."/>
            <person name="Samejima M."/>
            <person name="Tsumuraya Y."/>
        </authorList>
    </citation>
    <scope>FUNCTION</scope>
    <scope>CATALYTIC ACTIVITY</scope>
    <scope>BIOPHYSICOCHEMICAL PROPERTIES</scope>
</reference>
<accession>Q7SFB0</accession>
<sequence length="559" mass="60235">MKRILGLIAYASVPTVINAVQISVDETAPSNPVFDAYVSYSIEFSSFPDYAGNNSRPNTFSENLLDNLGKITGTKPYIRVGGNTQDYALYNASLPYSLNGTIDPKRSSDYPTTIFIGPSFFESYNSFKNTRFIHGFNLGLGGNRTSGWQTLLDTVPLACKALGGGKLFAWTYGNEPDLFSTSAQGPVRPPSWNEAEYVDQWLNGTRKIHELLERNCPDLAKNGTYGYIAPSFAGVGNKLKAPKAWGEGLNEDKNIKLFATHNYISGATSPGVTLQGTLMNHSMTKASVDAHIVEYNQVKAIDAAAPPLIFGETNSLYNQGRPGLSNTFGAALWGVDFNLYSASVGFKRVHMHMGTNYRYASWQPIATNKATIGTKAPYYGNIAVASFLAPPPSSPYDSPATSLATVKHLPISSTPFLSAYAAYHSSNLTRLILINLQSYNTTASGEGLAPLPPSSLTPRPSVTFNFTLPAAYLLTDGGKEKQVVVKRLMANGSDAITGITWDGWSYNWELDGGRPVRLPNVTRTSESERAWVGEGTSDGGKAGLGVVVEAGSAALVEFV</sequence>
<comment type="function">
    <text evidence="4">Beta-glucuronidase that hydrolyzes beta-glucuronosyl and 4-O-methyl-beta-glucuronosyl residues of arabinogalactan-protein. Hydrolyzed heparan sulfate only very weakly. Has no activity on xylan from birchwood. Able to catalyze the transglycosylation of glucuronic acid (GlcA) residues from p-nitrophenyl-beta-glucuronic acid (PNP beta-GlcA) to various monosaccharide acceptors such as glucose, galactose and xylose.</text>
</comment>
<comment type="catalytic activity">
    <reaction evidence="4">
        <text>a beta-D-glucuronoside + H2O = D-glucuronate + an alcohol</text>
        <dbReference type="Rhea" id="RHEA:17633"/>
        <dbReference type="ChEBI" id="CHEBI:15377"/>
        <dbReference type="ChEBI" id="CHEBI:30879"/>
        <dbReference type="ChEBI" id="CHEBI:58720"/>
        <dbReference type="ChEBI" id="CHEBI:83411"/>
        <dbReference type="EC" id="3.2.1.31"/>
    </reaction>
</comment>
<comment type="biophysicochemical properties">
    <kinetics>
        <KM evidence="4">38.3 uM for p-nitrophenyl-beta-glucuronic acid (when expressed in P.pastoris)</KM>
        <KM evidence="4">378 uM for p-nitrophenyl-beta-galacturonic acid (when expressed in P.pastoris)</KM>
    </kinetics>
    <phDependence>
        <text evidence="4">Optimum pH is 6.0.</text>
    </phDependence>
    <temperatureDependence>
        <text evidence="4">Optimum temperature is 45 degrees Celsius.</text>
    </temperatureDependence>
</comment>
<comment type="subcellular location">
    <subcellularLocation>
        <location evidence="1">Secreted</location>
    </subcellularLocation>
</comment>
<comment type="similarity">
    <text evidence="6">Belongs to the glycosyl hydrolase 79 family.</text>
</comment>
<feature type="signal peptide" evidence="2">
    <location>
        <begin position="1"/>
        <end position="19"/>
    </location>
</feature>
<feature type="chain" id="PRO_0000432746" description="Beta-glucuronidase" evidence="2">
    <location>
        <begin position="20"/>
        <end position="559"/>
    </location>
</feature>
<feature type="active site" description="Proton donor" evidence="2">
    <location>
        <position position="194"/>
    </location>
</feature>
<feature type="active site" description="Nucleophile" evidence="2">
    <location>
        <position position="312"/>
    </location>
</feature>
<feature type="glycosylation site" description="N-linked (GlcNAc...) asparagine" evidence="3">
    <location>
        <position position="53"/>
    </location>
</feature>
<feature type="glycosylation site" description="N-linked (GlcNAc...) asparagine" evidence="3">
    <location>
        <position position="91"/>
    </location>
</feature>
<feature type="glycosylation site" description="N-linked (GlcNAc...) asparagine" evidence="3">
    <location>
        <position position="99"/>
    </location>
</feature>
<feature type="glycosylation site" description="N-linked (GlcNAc...) asparagine" evidence="3">
    <location>
        <position position="143"/>
    </location>
</feature>
<feature type="glycosylation site" description="N-linked (GlcNAc...) asparagine" evidence="3">
    <location>
        <position position="203"/>
    </location>
</feature>
<feature type="glycosylation site" description="N-linked (GlcNAc...) asparagine" evidence="3">
    <location>
        <position position="222"/>
    </location>
</feature>
<feature type="glycosylation site" description="N-linked (GlcNAc...) asparagine" evidence="3">
    <location>
        <position position="280"/>
    </location>
</feature>
<feature type="glycosylation site" description="N-linked (GlcNAc...) asparagine" evidence="3">
    <location>
        <position position="427"/>
    </location>
</feature>
<feature type="glycosylation site" description="N-linked (GlcNAc...) asparagine" evidence="3">
    <location>
        <position position="440"/>
    </location>
</feature>
<feature type="glycosylation site" description="N-linked (GlcNAc...) asparagine" evidence="3">
    <location>
        <position position="465"/>
    </location>
</feature>
<feature type="glycosylation site" description="N-linked (GlcNAc...) asparagine" evidence="3">
    <location>
        <position position="491"/>
    </location>
</feature>
<feature type="glycosylation site" description="N-linked (GlcNAc...) asparagine" evidence="3">
    <location>
        <position position="520"/>
    </location>
</feature>
<evidence type="ECO:0000250" key="1">
    <source>
        <dbReference type="UniProtKB" id="A2QEQ6"/>
    </source>
</evidence>
<evidence type="ECO:0000255" key="2"/>
<evidence type="ECO:0000255" key="3">
    <source>
        <dbReference type="PROSITE-ProRule" id="PRU00498"/>
    </source>
</evidence>
<evidence type="ECO:0000269" key="4">
    <source>
    </source>
</evidence>
<evidence type="ECO:0000303" key="5">
    <source>
    </source>
</evidence>
<evidence type="ECO:0000305" key="6"/>
<organism>
    <name type="scientific">Neurospora crassa (strain ATCC 24698 / 74-OR23-1A / CBS 708.71 / DSM 1257 / FGSC 987)</name>
    <dbReference type="NCBI Taxonomy" id="367110"/>
    <lineage>
        <taxon>Eukaryota</taxon>
        <taxon>Fungi</taxon>
        <taxon>Dikarya</taxon>
        <taxon>Ascomycota</taxon>
        <taxon>Pezizomycotina</taxon>
        <taxon>Sordariomycetes</taxon>
        <taxon>Sordariomycetidae</taxon>
        <taxon>Sordariales</taxon>
        <taxon>Sordariaceae</taxon>
        <taxon>Neurospora</taxon>
    </lineage>
</organism>
<name>GUS79_NEUCR</name>
<proteinExistence type="evidence at protein level"/>
<protein>
    <recommendedName>
        <fullName evidence="5">Beta-glucuronidase</fullName>
        <shortName evidence="5">GlcAase</shortName>
        <ecNumber evidence="4">3.2.1.31</ecNumber>
    </recommendedName>
    <alternativeName>
        <fullName evidence="6">Beta-D-glucuronoside glucuronosohydrolase</fullName>
    </alternativeName>
</protein>
<keyword id="KW-0325">Glycoprotein</keyword>
<keyword id="KW-0378">Hydrolase</keyword>
<keyword id="KW-1185">Reference proteome</keyword>
<keyword id="KW-0964">Secreted</keyword>
<keyword id="KW-0732">Signal</keyword>